<gene>
    <name evidence="1" type="primary">ssuD</name>
    <name type="ordered locus">sce4918</name>
</gene>
<dbReference type="EC" id="1.14.14.5" evidence="1"/>
<dbReference type="EMBL" id="AM746676">
    <property type="protein sequence ID" value="CAN95081.1"/>
    <property type="molecule type" value="Genomic_DNA"/>
</dbReference>
<dbReference type="RefSeq" id="WP_012237550.1">
    <property type="nucleotide sequence ID" value="NC_010162.1"/>
</dbReference>
<dbReference type="SMR" id="A9FK50"/>
<dbReference type="STRING" id="448385.sce4918"/>
<dbReference type="KEGG" id="scl:sce4918"/>
<dbReference type="eggNOG" id="COG2141">
    <property type="taxonomic scope" value="Bacteria"/>
</dbReference>
<dbReference type="HOGENOM" id="CLU_027853_1_0_7"/>
<dbReference type="OrthoDB" id="9814695at2"/>
<dbReference type="BioCyc" id="SCEL448385:SCE_RS25240-MONOMER"/>
<dbReference type="Proteomes" id="UP000002139">
    <property type="component" value="Chromosome"/>
</dbReference>
<dbReference type="GO" id="GO:0008726">
    <property type="term" value="F:alkanesulfonate monooxygenase activity"/>
    <property type="evidence" value="ECO:0007669"/>
    <property type="project" value="UniProtKB-UniRule"/>
</dbReference>
<dbReference type="GO" id="GO:0046306">
    <property type="term" value="P:alkanesulfonate catabolic process"/>
    <property type="evidence" value="ECO:0007669"/>
    <property type="project" value="TreeGrafter"/>
</dbReference>
<dbReference type="CDD" id="cd01094">
    <property type="entry name" value="Alkanesulfonate_monoxygenase"/>
    <property type="match status" value="1"/>
</dbReference>
<dbReference type="Gene3D" id="3.20.20.30">
    <property type="entry name" value="Luciferase-like domain"/>
    <property type="match status" value="1"/>
</dbReference>
<dbReference type="HAMAP" id="MF_01229">
    <property type="entry name" value="Alkanesulf_monooxygen"/>
    <property type="match status" value="1"/>
</dbReference>
<dbReference type="InterPro" id="IPR019911">
    <property type="entry name" value="Alkanesulphonate_mOase_FMN-dep"/>
</dbReference>
<dbReference type="InterPro" id="IPR011251">
    <property type="entry name" value="Luciferase-like_dom"/>
</dbReference>
<dbReference type="InterPro" id="IPR036661">
    <property type="entry name" value="Luciferase-like_sf"/>
</dbReference>
<dbReference type="InterPro" id="IPR050172">
    <property type="entry name" value="SsuD_RutA_monooxygenase"/>
</dbReference>
<dbReference type="NCBIfam" id="TIGR03565">
    <property type="entry name" value="alk_sulf_monoox"/>
    <property type="match status" value="1"/>
</dbReference>
<dbReference type="NCBIfam" id="NF001939">
    <property type="entry name" value="PRK00719.1"/>
    <property type="match status" value="1"/>
</dbReference>
<dbReference type="PANTHER" id="PTHR42847">
    <property type="entry name" value="ALKANESULFONATE MONOOXYGENASE"/>
    <property type="match status" value="1"/>
</dbReference>
<dbReference type="PANTHER" id="PTHR42847:SF4">
    <property type="entry name" value="ALKANESULFONATE MONOOXYGENASE-RELATED"/>
    <property type="match status" value="1"/>
</dbReference>
<dbReference type="Pfam" id="PF00296">
    <property type="entry name" value="Bac_luciferase"/>
    <property type="match status" value="1"/>
</dbReference>
<dbReference type="SUPFAM" id="SSF51679">
    <property type="entry name" value="Bacterial luciferase-like"/>
    <property type="match status" value="1"/>
</dbReference>
<accession>A9FK50</accession>
<feature type="chain" id="PRO_1000085714" description="Alkanesulfonate monooxygenase">
    <location>
        <begin position="1"/>
        <end position="379"/>
    </location>
</feature>
<keyword id="KW-0285">Flavoprotein</keyword>
<keyword id="KW-0288">FMN</keyword>
<keyword id="KW-0503">Monooxygenase</keyword>
<keyword id="KW-0560">Oxidoreductase</keyword>
<keyword id="KW-1185">Reference proteome</keyword>
<evidence type="ECO:0000255" key="1">
    <source>
        <dbReference type="HAMAP-Rule" id="MF_01229"/>
    </source>
</evidence>
<name>SSUD_SORC5</name>
<organism>
    <name type="scientific">Sorangium cellulosum (strain So ce56)</name>
    <name type="common">Polyangium cellulosum (strain So ce56)</name>
    <dbReference type="NCBI Taxonomy" id="448385"/>
    <lineage>
        <taxon>Bacteria</taxon>
        <taxon>Pseudomonadati</taxon>
        <taxon>Myxococcota</taxon>
        <taxon>Polyangia</taxon>
        <taxon>Polyangiales</taxon>
        <taxon>Polyangiaceae</taxon>
        <taxon>Sorangium</taxon>
    </lineage>
</organism>
<reference key="1">
    <citation type="journal article" date="2007" name="Nat. Biotechnol.">
        <title>Complete genome sequence of the myxobacterium Sorangium cellulosum.</title>
        <authorList>
            <person name="Schneiker S."/>
            <person name="Perlova O."/>
            <person name="Kaiser O."/>
            <person name="Gerth K."/>
            <person name="Alici A."/>
            <person name="Altmeyer M.O."/>
            <person name="Bartels D."/>
            <person name="Bekel T."/>
            <person name="Beyer S."/>
            <person name="Bode E."/>
            <person name="Bode H.B."/>
            <person name="Bolten C.J."/>
            <person name="Choudhuri J.V."/>
            <person name="Doss S."/>
            <person name="Elnakady Y.A."/>
            <person name="Frank B."/>
            <person name="Gaigalat L."/>
            <person name="Goesmann A."/>
            <person name="Groeger C."/>
            <person name="Gross F."/>
            <person name="Jelsbak L."/>
            <person name="Jelsbak L."/>
            <person name="Kalinowski J."/>
            <person name="Kegler C."/>
            <person name="Knauber T."/>
            <person name="Konietzny S."/>
            <person name="Kopp M."/>
            <person name="Krause L."/>
            <person name="Krug D."/>
            <person name="Linke B."/>
            <person name="Mahmud T."/>
            <person name="Martinez-Arias R."/>
            <person name="McHardy A.C."/>
            <person name="Merai M."/>
            <person name="Meyer F."/>
            <person name="Mormann S."/>
            <person name="Munoz-Dorado J."/>
            <person name="Perez J."/>
            <person name="Pradella S."/>
            <person name="Rachid S."/>
            <person name="Raddatz G."/>
            <person name="Rosenau F."/>
            <person name="Rueckert C."/>
            <person name="Sasse F."/>
            <person name="Scharfe M."/>
            <person name="Schuster S.C."/>
            <person name="Suen G."/>
            <person name="Treuner-Lange A."/>
            <person name="Velicer G.J."/>
            <person name="Vorholter F.-J."/>
            <person name="Weissman K.J."/>
            <person name="Welch R.D."/>
            <person name="Wenzel S.C."/>
            <person name="Whitworth D.E."/>
            <person name="Wilhelm S."/>
            <person name="Wittmann C."/>
            <person name="Bloecker H."/>
            <person name="Puehler A."/>
            <person name="Mueller R."/>
        </authorList>
    </citation>
    <scope>NUCLEOTIDE SEQUENCE [LARGE SCALE GENOMIC DNA]</scope>
    <source>
        <strain>So ce56</strain>
    </source>
</reference>
<sequence length="379" mass="41239">MNVFWFLPTHGDGRYLGTAEGARPVTLPYLRQIAQAADDLGYHGVLVPTGRSCEDAWAVASAMIPLTQRLRFLVAVRPGVVSPTWAARMASTVDRLSDGRLLVNVVTGGDPAESEGDGVFLKHDDRYVVTDEFLGIWRRVMAGETVDFTGQHLRVKGAKILFPPLQAPHPPLYFGGSSPAAHGLAARHVDVYLTWGEPPAAVAEKIADVRRRAAAEQRTVRFGIRLHVIVRETSEAAWAAANDLIRHLDDSTIAAAQQAFGRLDSEGQRRMAALHKGRRDALEVSPNLWAGVGLVRGGAGTALVGDAETVARRMKEYAELGIETFILSGYPHLEEAYRVAELLFPRLPVERRTAGVSPNLTGPFGEIIANDIVPHRSQS</sequence>
<protein>
    <recommendedName>
        <fullName evidence="1">Alkanesulfonate monooxygenase</fullName>
        <ecNumber evidence="1">1.14.14.5</ecNumber>
    </recommendedName>
    <alternativeName>
        <fullName evidence="1">FMNH2-dependent aliphatic sulfonate monooxygenase</fullName>
    </alternativeName>
</protein>
<comment type="function">
    <text evidence="1">Catalyzes the desulfonation of aliphatic sulfonates.</text>
</comment>
<comment type="catalytic activity">
    <reaction evidence="1">
        <text>an alkanesulfonate + FMNH2 + O2 = an aldehyde + FMN + sulfite + H2O + 2 H(+)</text>
        <dbReference type="Rhea" id="RHEA:23064"/>
        <dbReference type="ChEBI" id="CHEBI:15377"/>
        <dbReference type="ChEBI" id="CHEBI:15378"/>
        <dbReference type="ChEBI" id="CHEBI:15379"/>
        <dbReference type="ChEBI" id="CHEBI:17359"/>
        <dbReference type="ChEBI" id="CHEBI:17478"/>
        <dbReference type="ChEBI" id="CHEBI:57618"/>
        <dbReference type="ChEBI" id="CHEBI:58210"/>
        <dbReference type="ChEBI" id="CHEBI:134249"/>
        <dbReference type="EC" id="1.14.14.5"/>
    </reaction>
</comment>
<comment type="similarity">
    <text evidence="1">Belongs to the SsuD family.</text>
</comment>
<proteinExistence type="inferred from homology"/>